<accession>Q76MT4</accession>
<reference key="1">
    <citation type="journal article" date="2004" name="J. Cell. Biochem.">
        <title>ABT1-associated protein (ABTAP), a novel nuclear protein conserved from yeast to mammals, represses transcriptional activation by ABT1.</title>
        <authorList>
            <person name="Oda T."/>
            <person name="Fukuda A."/>
            <person name="Hagiwara H."/>
            <person name="Masuho Y."/>
            <person name="Muramatsu M.-A."/>
            <person name="Hisatake K."/>
            <person name="Yamashita T."/>
        </authorList>
    </citation>
    <scope>NUCLEOTIDE SEQUENCE [MRNA]</scope>
    <scope>INTERACTION WITH ABT1</scope>
    <scope>SUBCELLULAR LOCATION</scope>
    <scope>TISSUE SPECIFICITY</scope>
    <scope>POSSIBLE FUNCTION</scope>
</reference>
<reference key="2">
    <citation type="journal article" date="2012" name="Nat. Commun.">
        <title>Quantitative maps of protein phosphorylation sites across 14 different rat organs and tissues.</title>
        <authorList>
            <person name="Lundby A."/>
            <person name="Secher A."/>
            <person name="Lage K."/>
            <person name="Nordsborg N.B."/>
            <person name="Dmytriyev A."/>
            <person name="Lundby C."/>
            <person name="Olsen J.V."/>
        </authorList>
    </citation>
    <scope>PHOSPHORYLATION [LARGE SCALE ANALYSIS] AT SER-75; SER-77; SER-79; SER-82; SER-180; THR-303; SER-304; SER-305; SER-648; SER-654 AND SER-686</scope>
    <scope>IDENTIFICATION BY MASS SPECTROMETRY [LARGE SCALE ANALYSIS]</scope>
</reference>
<organism>
    <name type="scientific">Rattus norvegicus</name>
    <name type="common">Rat</name>
    <dbReference type="NCBI Taxonomy" id="10116"/>
    <lineage>
        <taxon>Eukaryota</taxon>
        <taxon>Metazoa</taxon>
        <taxon>Chordata</taxon>
        <taxon>Craniata</taxon>
        <taxon>Vertebrata</taxon>
        <taxon>Euteleostomi</taxon>
        <taxon>Mammalia</taxon>
        <taxon>Eutheria</taxon>
        <taxon>Euarchontoglires</taxon>
        <taxon>Glires</taxon>
        <taxon>Rodentia</taxon>
        <taxon>Myomorpha</taxon>
        <taxon>Muroidea</taxon>
        <taxon>Muridae</taxon>
        <taxon>Murinae</taxon>
        <taxon>Rattus</taxon>
    </lineage>
</organism>
<evidence type="ECO:0000250" key="1">
    <source>
        <dbReference type="UniProtKB" id="Q9H501"/>
    </source>
</evidence>
<evidence type="ECO:0000255" key="2"/>
<evidence type="ECO:0000256" key="3">
    <source>
        <dbReference type="SAM" id="MobiDB-lite"/>
    </source>
</evidence>
<evidence type="ECO:0000269" key="4">
    <source>
    </source>
</evidence>
<evidence type="ECO:0000305" key="5"/>
<evidence type="ECO:0007744" key="6">
    <source>
    </source>
</evidence>
<gene>
    <name type="primary">Esf1</name>
    <name type="synonym">Abtap</name>
</gene>
<keyword id="KW-0007">Acetylation</keyword>
<keyword id="KW-0175">Coiled coil</keyword>
<keyword id="KW-0539">Nucleus</keyword>
<keyword id="KW-0597">Phosphoprotein</keyword>
<keyword id="KW-1185">Reference proteome</keyword>
<keyword id="KW-0804">Transcription</keyword>
<keyword id="KW-0805">Transcription regulation</keyword>
<feature type="initiator methionine" description="Removed" evidence="1">
    <location>
        <position position="1"/>
    </location>
</feature>
<feature type="chain" id="PRO_0000233167" description="ESF1 homolog">
    <location>
        <begin position="2"/>
        <end position="842"/>
    </location>
</feature>
<feature type="region of interest" description="Disordered" evidence="3">
    <location>
        <begin position="54"/>
        <end position="317"/>
    </location>
</feature>
<feature type="region of interest" description="Disordered" evidence="3">
    <location>
        <begin position="534"/>
        <end position="568"/>
    </location>
</feature>
<feature type="region of interest" description="Disordered" evidence="3">
    <location>
        <begin position="631"/>
        <end position="657"/>
    </location>
</feature>
<feature type="region of interest" description="Disordered" evidence="3">
    <location>
        <begin position="674"/>
        <end position="693"/>
    </location>
</feature>
<feature type="region of interest" description="Disordered" evidence="3">
    <location>
        <begin position="785"/>
        <end position="816"/>
    </location>
</feature>
<feature type="coiled-coil region" evidence="2">
    <location>
        <begin position="772"/>
        <end position="804"/>
    </location>
</feature>
<feature type="compositionally biased region" description="Basic and acidic residues" evidence="3">
    <location>
        <begin position="64"/>
        <end position="73"/>
    </location>
</feature>
<feature type="compositionally biased region" description="Basic and acidic residues" evidence="3">
    <location>
        <begin position="84"/>
        <end position="94"/>
    </location>
</feature>
<feature type="compositionally biased region" description="Basic and acidic residues" evidence="3">
    <location>
        <begin position="102"/>
        <end position="128"/>
    </location>
</feature>
<feature type="compositionally biased region" description="Basic and acidic residues" evidence="3">
    <location>
        <begin position="148"/>
        <end position="164"/>
    </location>
</feature>
<feature type="compositionally biased region" description="Polar residues" evidence="3">
    <location>
        <begin position="190"/>
        <end position="203"/>
    </location>
</feature>
<feature type="compositionally biased region" description="Acidic residues" evidence="3">
    <location>
        <begin position="228"/>
        <end position="250"/>
    </location>
</feature>
<feature type="compositionally biased region" description="Acidic residues" evidence="3">
    <location>
        <begin position="258"/>
        <end position="290"/>
    </location>
</feature>
<feature type="compositionally biased region" description="Acidic residues" evidence="3">
    <location>
        <begin position="304"/>
        <end position="316"/>
    </location>
</feature>
<feature type="compositionally biased region" description="Acidic residues" evidence="3">
    <location>
        <begin position="536"/>
        <end position="553"/>
    </location>
</feature>
<feature type="compositionally biased region" description="Basic and acidic residues" evidence="3">
    <location>
        <begin position="555"/>
        <end position="564"/>
    </location>
</feature>
<feature type="compositionally biased region" description="Basic residues" evidence="3">
    <location>
        <begin position="631"/>
        <end position="641"/>
    </location>
</feature>
<feature type="compositionally biased region" description="Acidic residues" evidence="3">
    <location>
        <begin position="646"/>
        <end position="657"/>
    </location>
</feature>
<feature type="compositionally biased region" description="Basic and acidic residues" evidence="3">
    <location>
        <begin position="785"/>
        <end position="795"/>
    </location>
</feature>
<feature type="modified residue" description="N-acetylserine" evidence="1">
    <location>
        <position position="2"/>
    </location>
</feature>
<feature type="modified residue" description="Phosphoserine" evidence="6">
    <location>
        <position position="75"/>
    </location>
</feature>
<feature type="modified residue" description="Phosphoserine" evidence="6">
    <location>
        <position position="77"/>
    </location>
</feature>
<feature type="modified residue" description="Phosphoserine" evidence="6">
    <location>
        <position position="79"/>
    </location>
</feature>
<feature type="modified residue" description="Phosphoserine" evidence="6">
    <location>
        <position position="82"/>
    </location>
</feature>
<feature type="modified residue" description="Phosphoserine" evidence="1">
    <location>
        <position position="135"/>
    </location>
</feature>
<feature type="modified residue" description="Phosphoserine" evidence="1">
    <location>
        <position position="155"/>
    </location>
</feature>
<feature type="modified residue" description="Phosphoserine" evidence="6">
    <location>
        <position position="180"/>
    </location>
</feature>
<feature type="modified residue" description="Phosphoserine" evidence="1">
    <location>
        <position position="198"/>
    </location>
</feature>
<feature type="modified residue" description="Phosphoserine" evidence="1">
    <location>
        <position position="288"/>
    </location>
</feature>
<feature type="modified residue" description="Phosphoserine" evidence="1">
    <location>
        <position position="290"/>
    </location>
</feature>
<feature type="modified residue" description="Phosphothreonine" evidence="6">
    <location>
        <position position="303"/>
    </location>
</feature>
<feature type="modified residue" description="Phosphoserine" evidence="6">
    <location>
        <position position="304"/>
    </location>
</feature>
<feature type="modified residue" description="Phosphoserine" evidence="6">
    <location>
        <position position="305"/>
    </location>
</feature>
<feature type="modified residue" description="Phosphoserine" evidence="1">
    <location>
        <position position="605"/>
    </location>
</feature>
<feature type="modified residue" description="Phosphoserine" evidence="6">
    <location>
        <position position="648"/>
    </location>
</feature>
<feature type="modified residue" description="Phosphoserine" evidence="6">
    <location>
        <position position="654"/>
    </location>
</feature>
<feature type="modified residue" description="Phosphoserine" evidence="6">
    <location>
        <position position="686"/>
    </location>
</feature>
<feature type="modified residue" description="Phosphoserine" evidence="1">
    <location>
        <position position="726"/>
    </location>
</feature>
<sequence length="842" mass="97534">MSSKQEIMDDQRFRRVSKDPRFWEMPEKDRKVKIDKRFRAMFHDKKFKLNYAVDKRGRPISHSTTEDLKRFYDLSDSDSDLSDEESKVLDEKRVKEKKKQTKKETKSKTPIEEKKKETKKTDQKDSINKNDLNNSERIQKMKNSHKSPKIDSEVSPKDSEESLQSRKKKRDTTDLSVEASPKGKLRTKDPSTSAMVKSSTVSGSKAKREKQAVIMAKDNAGRMLHEEAPEEDSDSASELGRDEESEGEITSDDRASADDDENEDEEEEEDGEEEEEEEEEEDESDDESDSGPDLARGKGNVETSSEDEDDLADLFPEEPGFEHAWRELDKDAPRADEITRRLAVCNMDWDRLKAKDLLALFNSFKPKGGVVFSVKIYPSEFGKQRMKEEQIQGPVELLSIPEDAPEKDWASREKLRDYQFKRLKYYYAVVECDSPETASKIYEDCDGLEFESSCSFIDLRFIPDDITFDDEPKDAASEVDLTAYKPKYFTSAAMGTSTVEITWDETDHERITTLNRKFKKDELLDMDFEAYLASSSEDEEEVEEAPEGEDGVSIEDGKTKKSQKDDEEQIAKYRQLLQVIQEKEKKGKENDMEMEIKWVPGLKESAEEMVKNKLEGKDKLTPWEQFLEKKKEKKRLKKKQKALAEEASEDEIPSDVDLNDPYFAEEVKKIGIKKKSMKSAKDGATSEEETELEKQKAEMALLVMDEEEDSKKHFNYDKIVEHQNLSKKKKKQLMKKKELLEDDFEVNVSDARFQAMYTSHLFNLDPSDPNFKKTKAMEKILEEKARHREQKEERLIQAVERAQQDTGKPAQKQPMDPALSMLIKSVKNKTEQFQARKKQRIK</sequence>
<protein>
    <recommendedName>
        <fullName>ESF1 homolog</fullName>
    </recommendedName>
    <alternativeName>
        <fullName>ABT1-associated protein</fullName>
    </alternativeName>
</protein>
<dbReference type="EMBL" id="AB038233">
    <property type="protein sequence ID" value="BAD10946.1"/>
    <property type="molecule type" value="mRNA"/>
</dbReference>
<dbReference type="RefSeq" id="NP_001094241.1">
    <property type="nucleotide sequence ID" value="NM_001100771.2"/>
</dbReference>
<dbReference type="RefSeq" id="NP_001421357.1">
    <property type="nucleotide sequence ID" value="NM_001434428.1"/>
</dbReference>
<dbReference type="RefSeq" id="NP_001421358.1">
    <property type="nucleotide sequence ID" value="NM_001434429.1"/>
</dbReference>
<dbReference type="RefSeq" id="XP_006235167.1">
    <property type="nucleotide sequence ID" value="XM_006235105.3"/>
</dbReference>
<dbReference type="RefSeq" id="XP_006235168.1">
    <property type="nucleotide sequence ID" value="XM_006235106.2"/>
</dbReference>
<dbReference type="RefSeq" id="XP_017447439.1">
    <property type="nucleotide sequence ID" value="XM_017591950.3"/>
</dbReference>
<dbReference type="RefSeq" id="XP_063140357.1">
    <property type="nucleotide sequence ID" value="XM_063284287.1"/>
</dbReference>
<dbReference type="FunCoup" id="Q76MT4">
    <property type="interactions" value="3305"/>
</dbReference>
<dbReference type="STRING" id="10116.ENSRNOP00000037915"/>
<dbReference type="iPTMnet" id="Q76MT4"/>
<dbReference type="PhosphoSitePlus" id="Q76MT4"/>
<dbReference type="jPOST" id="Q76MT4"/>
<dbReference type="PaxDb" id="10116-ENSRNOP00000037915"/>
<dbReference type="Ensembl" id="ENSRNOT00000034487.6">
    <property type="protein sequence ID" value="ENSRNOP00000037915.4"/>
    <property type="gene ID" value="ENSRNOG00000004777.8"/>
</dbReference>
<dbReference type="GeneID" id="366203"/>
<dbReference type="KEGG" id="rno:366203"/>
<dbReference type="UCSC" id="RGD:1306067">
    <property type="organism name" value="rat"/>
</dbReference>
<dbReference type="AGR" id="RGD:1306067"/>
<dbReference type="CTD" id="51575"/>
<dbReference type="RGD" id="1306067">
    <property type="gene designation" value="Esf1"/>
</dbReference>
<dbReference type="eggNOG" id="KOG2318">
    <property type="taxonomic scope" value="Eukaryota"/>
</dbReference>
<dbReference type="GeneTree" id="ENSGT00390000004881"/>
<dbReference type="HOGENOM" id="CLU_010564_2_1_1"/>
<dbReference type="InParanoid" id="Q76MT4"/>
<dbReference type="OMA" id="DHDFAID"/>
<dbReference type="OrthoDB" id="86826at9989"/>
<dbReference type="PhylomeDB" id="Q76MT4"/>
<dbReference type="PRO" id="PR:Q76MT4"/>
<dbReference type="Proteomes" id="UP000002494">
    <property type="component" value="Chromosome 3"/>
</dbReference>
<dbReference type="Bgee" id="ENSRNOG00000004777">
    <property type="expression patterns" value="Expressed in lung and 19 other cell types or tissues"/>
</dbReference>
<dbReference type="GO" id="GO:0005730">
    <property type="term" value="C:nucleolus"/>
    <property type="evidence" value="ECO:0007669"/>
    <property type="project" value="UniProtKB-SubCell"/>
</dbReference>
<dbReference type="GO" id="GO:0005654">
    <property type="term" value="C:nucleoplasm"/>
    <property type="evidence" value="ECO:0007669"/>
    <property type="project" value="UniProtKB-SubCell"/>
</dbReference>
<dbReference type="GO" id="GO:0003723">
    <property type="term" value="F:RNA binding"/>
    <property type="evidence" value="ECO:0000318"/>
    <property type="project" value="GO_Central"/>
</dbReference>
<dbReference type="GO" id="GO:0006364">
    <property type="term" value="P:rRNA processing"/>
    <property type="evidence" value="ECO:0000318"/>
    <property type="project" value="GO_Central"/>
</dbReference>
<dbReference type="InterPro" id="IPR039754">
    <property type="entry name" value="Esf1"/>
</dbReference>
<dbReference type="InterPro" id="IPR012580">
    <property type="entry name" value="NUC153"/>
</dbReference>
<dbReference type="InterPro" id="IPR056750">
    <property type="entry name" value="RRM_ESF1"/>
</dbReference>
<dbReference type="PANTHER" id="PTHR12202">
    <property type="entry name" value="ESF1 HOMOLOG"/>
    <property type="match status" value="1"/>
</dbReference>
<dbReference type="PANTHER" id="PTHR12202:SF0">
    <property type="entry name" value="ESF1 HOMOLOG"/>
    <property type="match status" value="1"/>
</dbReference>
<dbReference type="Pfam" id="PF08159">
    <property type="entry name" value="NUC153"/>
    <property type="match status" value="1"/>
</dbReference>
<dbReference type="Pfam" id="PF25121">
    <property type="entry name" value="RRM_ESF1"/>
    <property type="match status" value="1"/>
</dbReference>
<comment type="function">
    <text>May constitute a novel regulatory system for basal transcription. Negatively regulates ABT1.</text>
</comment>
<comment type="subunit">
    <text evidence="4">Interacts with ABT1. Forms a complex with ABT1 and suppresses the ABT1-induced activation of polymerase II-directed transcription in mammalian cells. Disrupts the interaction between ABT1 and TATA-binding protein (TBP), and suppresses the ABT1-induced activation of polymerase II-directed basal transcription in vitro.</text>
</comment>
<comment type="subcellular location">
    <subcellularLocation>
        <location evidence="4">Nucleus</location>
        <location evidence="4">Nucleolus</location>
    </subcellularLocation>
    <subcellularLocation>
        <location evidence="4">Nucleus</location>
        <location evidence="4">Nucleoplasm</location>
    </subcellularLocation>
    <text>Is concomitantly relocalized into discrete nuclear bodies at higher expression.</text>
</comment>
<comment type="tissue specificity">
    <text evidence="4">Ubiquitously expressed.</text>
</comment>
<comment type="similarity">
    <text evidence="5">Belongs to the ESF1 family.</text>
</comment>
<name>ESF1_RAT</name>
<proteinExistence type="evidence at protein level"/>